<gene>
    <name type="primary">bhmt</name>
    <name type="ORF">wu:fb53h01</name>
    <name type="ORF">zgc:123027</name>
</gene>
<reference key="1">
    <citation type="submission" date="2004-11" db="EMBL/GenBank/DDBJ databases">
        <title>Molecular genetic analysis of folate metabolism in the zebrafish.</title>
        <authorList>
            <person name="Lapek J.D. Jr."/>
            <person name="Warren J.T. Jr."/>
        </authorList>
    </citation>
    <scope>NUCLEOTIDE SEQUENCE [MRNA]</scope>
</reference>
<reference key="2">
    <citation type="submission" date="2005-11" db="EMBL/GenBank/DDBJ databases">
        <authorList>
            <consortium name="NIH - Zebrafish Gene Collection (ZGC) project"/>
        </authorList>
    </citation>
    <scope>NUCLEOTIDE SEQUENCE [LARGE SCALE MRNA]</scope>
</reference>
<feature type="chain" id="PRO_0000273221" description="Betaine--homocysteine S-methyltransferase 1">
    <location>
        <begin position="1"/>
        <end position="400"/>
    </location>
</feature>
<feature type="domain" description="Hcy-binding" evidence="2">
    <location>
        <begin position="8"/>
        <end position="309"/>
    </location>
</feature>
<feature type="binding site" evidence="2">
    <location>
        <position position="212"/>
    </location>
    <ligand>
        <name>Zn(2+)</name>
        <dbReference type="ChEBI" id="CHEBI:29105"/>
    </ligand>
</feature>
<feature type="binding site" evidence="2">
    <location>
        <position position="294"/>
    </location>
    <ligand>
        <name>Zn(2+)</name>
        <dbReference type="ChEBI" id="CHEBI:29105"/>
    </ligand>
</feature>
<feature type="binding site" evidence="2">
    <location>
        <position position="295"/>
    </location>
    <ligand>
        <name>Zn(2+)</name>
        <dbReference type="ChEBI" id="CHEBI:29105"/>
    </ligand>
</feature>
<feature type="sequence conflict" description="In Ref. 1; AAV74219." evidence="3" ref="1">
    <original>H</original>
    <variation>P</variation>
    <location>
        <position position="189"/>
    </location>
</feature>
<feature type="sequence conflict" description="In Ref. 1; AAV74219." evidence="3" ref="1">
    <original>I</original>
    <variation>T</variation>
    <location>
        <position position="192"/>
    </location>
</feature>
<feature type="sequence conflict" description="In Ref. 1; AAV74219." evidence="3" ref="1">
    <original>A</original>
    <variation>V</variation>
    <location>
        <position position="224"/>
    </location>
</feature>
<sequence length="400" mass="44066">MAPVGSKRGVLERLNAGEVVIGDGGFVFALEKRGYVKAGPWTPEAAAEHPEAVRQLHREFLRAGSNVMQTFTFYASDDKLENRGNKLSFTGQQINEAACDLAREVANEGDALVAGGVSQTPSYLSCKSEEEVKKTFKKQLDVFIKKNVDLLIAEYFEHVEEAEWAVQVLKATGKPVAATLCIGPDGDMHGVIPGECAVRLVKAGADIVGVNCHFDPLTCVKTVAMMKAAVEKAGLKAHYMTQPLAYHTPDCSCQGFIDLPEFPFALEPRILTRWEMQQYAREAYKAGIRYIGGCCGFEPYHIRAVAEELSAERGFLPEASQKHGLWGSGLEMHTKPWVRARARRDYWEKLKPASGRPLCPSMSTPDGWGVTRGHAALMQQKEATTAEQLRPLFQQADAKH</sequence>
<organism>
    <name type="scientific">Danio rerio</name>
    <name type="common">Zebrafish</name>
    <name type="synonym">Brachydanio rerio</name>
    <dbReference type="NCBI Taxonomy" id="7955"/>
    <lineage>
        <taxon>Eukaryota</taxon>
        <taxon>Metazoa</taxon>
        <taxon>Chordata</taxon>
        <taxon>Craniata</taxon>
        <taxon>Vertebrata</taxon>
        <taxon>Euteleostomi</taxon>
        <taxon>Actinopterygii</taxon>
        <taxon>Neopterygii</taxon>
        <taxon>Teleostei</taxon>
        <taxon>Ostariophysi</taxon>
        <taxon>Cypriniformes</taxon>
        <taxon>Danionidae</taxon>
        <taxon>Danioninae</taxon>
        <taxon>Danio</taxon>
    </lineage>
</organism>
<proteinExistence type="evidence at transcript level"/>
<accession>Q32LQ4</accession>
<accession>Q5PSM1</accession>
<comment type="function">
    <text evidence="1">Involved in the regulation of homocysteine metabolism. Converts betaine and homocysteine to dimethylglycine and methionine, respectively. This reaction is also required for the irreversible oxidation of choline (By similarity).</text>
</comment>
<comment type="catalytic activity">
    <reaction>
        <text>L-homocysteine + glycine betaine = N,N-dimethylglycine + L-methionine</text>
        <dbReference type="Rhea" id="RHEA:22336"/>
        <dbReference type="ChEBI" id="CHEBI:17750"/>
        <dbReference type="ChEBI" id="CHEBI:57844"/>
        <dbReference type="ChEBI" id="CHEBI:58199"/>
        <dbReference type="ChEBI" id="CHEBI:58251"/>
        <dbReference type="EC" id="2.1.1.5"/>
    </reaction>
</comment>
<comment type="cofactor">
    <cofactor evidence="1">
        <name>Zn(2+)</name>
        <dbReference type="ChEBI" id="CHEBI:29105"/>
    </cofactor>
    <text evidence="1">Binds 1 zinc ion per subunit.</text>
</comment>
<comment type="pathway">
    <text>Amine and polyamine degradation; betaine degradation; sarcosine from betaine: step 1/2.</text>
</comment>
<comment type="pathway">
    <text>Amino-acid biosynthesis; L-methionine biosynthesis via de novo pathway; L-methionine from L-homocysteine (BhmT route): step 1/1.</text>
</comment>
<comment type="subunit">
    <text evidence="1">Homotetramer.</text>
</comment>
<comment type="subcellular location">
    <subcellularLocation>
        <location evidence="1">Cytoplasm</location>
    </subcellularLocation>
</comment>
<evidence type="ECO:0000250" key="1"/>
<evidence type="ECO:0000255" key="2">
    <source>
        <dbReference type="PROSITE-ProRule" id="PRU00333"/>
    </source>
</evidence>
<evidence type="ECO:0000305" key="3"/>
<dbReference type="EC" id="2.1.1.5"/>
<dbReference type="EMBL" id="AY830415">
    <property type="protein sequence ID" value="AAV74219.1"/>
    <property type="molecule type" value="mRNA"/>
</dbReference>
<dbReference type="EMBL" id="BC109472">
    <property type="protein sequence ID" value="AAI09473.1"/>
    <property type="molecule type" value="mRNA"/>
</dbReference>
<dbReference type="RefSeq" id="NP_001012498.1">
    <property type="nucleotide sequence ID" value="NM_001012480.1"/>
</dbReference>
<dbReference type="SMR" id="Q32LQ4"/>
<dbReference type="FunCoup" id="Q32LQ4">
    <property type="interactions" value="156"/>
</dbReference>
<dbReference type="STRING" id="7955.ENSDARP00000040421"/>
<dbReference type="PaxDb" id="7955-ENSDARP00000040421"/>
<dbReference type="GeneID" id="322228"/>
<dbReference type="KEGG" id="dre:322228"/>
<dbReference type="AGR" id="ZFIN:ZDB-GENE-030131-947"/>
<dbReference type="CTD" id="635"/>
<dbReference type="ZFIN" id="ZDB-GENE-030131-947">
    <property type="gene designation" value="bhmt"/>
</dbReference>
<dbReference type="eggNOG" id="KOG1579">
    <property type="taxonomic scope" value="Eukaryota"/>
</dbReference>
<dbReference type="InParanoid" id="Q32LQ4"/>
<dbReference type="OrthoDB" id="261426at2759"/>
<dbReference type="PhylomeDB" id="Q32LQ4"/>
<dbReference type="Reactome" id="R-DRE-1614635">
    <property type="pathway name" value="Sulfur amino acid metabolism"/>
</dbReference>
<dbReference type="Reactome" id="R-DRE-6798163">
    <property type="pathway name" value="Choline catabolism"/>
</dbReference>
<dbReference type="UniPathway" id="UPA00051">
    <property type="reaction ID" value="UER00083"/>
</dbReference>
<dbReference type="UniPathway" id="UPA00291">
    <property type="reaction ID" value="UER00432"/>
</dbReference>
<dbReference type="PRO" id="PR:Q32LQ4"/>
<dbReference type="Proteomes" id="UP000000437">
    <property type="component" value="Chromosome 21"/>
</dbReference>
<dbReference type="GO" id="GO:0005829">
    <property type="term" value="C:cytosol"/>
    <property type="evidence" value="ECO:0000318"/>
    <property type="project" value="GO_Central"/>
</dbReference>
<dbReference type="GO" id="GO:0047150">
    <property type="term" value="F:betaine-homocysteine S-methyltransferase activity"/>
    <property type="evidence" value="ECO:0000318"/>
    <property type="project" value="GO_Central"/>
</dbReference>
<dbReference type="GO" id="GO:0008270">
    <property type="term" value="F:zinc ion binding"/>
    <property type="evidence" value="ECO:0007669"/>
    <property type="project" value="InterPro"/>
</dbReference>
<dbReference type="GO" id="GO:0006579">
    <property type="term" value="P:amino-acid betaine catabolic process"/>
    <property type="evidence" value="ECO:0007669"/>
    <property type="project" value="UniProtKB-UniPathway"/>
</dbReference>
<dbReference type="GO" id="GO:0055123">
    <property type="term" value="P:digestive system development"/>
    <property type="evidence" value="ECO:0000315"/>
    <property type="project" value="ZFIN"/>
</dbReference>
<dbReference type="GO" id="GO:0071267">
    <property type="term" value="P:L-methionine salvage"/>
    <property type="evidence" value="ECO:0000318"/>
    <property type="project" value="GO_Central"/>
</dbReference>
<dbReference type="GO" id="GO:0032259">
    <property type="term" value="P:methylation"/>
    <property type="evidence" value="ECO:0007669"/>
    <property type="project" value="UniProtKB-KW"/>
</dbReference>
<dbReference type="GO" id="GO:0003323">
    <property type="term" value="P:type B pancreatic cell development"/>
    <property type="evidence" value="ECO:0000315"/>
    <property type="project" value="ZFIN"/>
</dbReference>
<dbReference type="FunFam" id="3.20.20.330:FF:000003">
    <property type="entry name" value="Betaine--homocysteine S-methyltransferase 1"/>
    <property type="match status" value="1"/>
</dbReference>
<dbReference type="Gene3D" id="3.20.20.330">
    <property type="entry name" value="Homocysteine-binding-like domain"/>
    <property type="match status" value="1"/>
</dbReference>
<dbReference type="InterPro" id="IPR017226">
    <property type="entry name" value="Betaine-hCys_S-MeTrfase_BHMT"/>
</dbReference>
<dbReference type="InterPro" id="IPR051524">
    <property type="entry name" value="BHMT"/>
</dbReference>
<dbReference type="InterPro" id="IPR003726">
    <property type="entry name" value="HCY_dom"/>
</dbReference>
<dbReference type="InterPro" id="IPR036589">
    <property type="entry name" value="HCY_dom_sf"/>
</dbReference>
<dbReference type="PANTHER" id="PTHR46120">
    <property type="entry name" value="BETAINE--HOMOCYSTEINE S-METHYLTRANSFERASE 1"/>
    <property type="match status" value="1"/>
</dbReference>
<dbReference type="PANTHER" id="PTHR46120:SF1">
    <property type="entry name" value="HCY-BINDING DOMAIN-CONTAINING PROTEIN"/>
    <property type="match status" value="1"/>
</dbReference>
<dbReference type="Pfam" id="PF02574">
    <property type="entry name" value="S-methyl_trans"/>
    <property type="match status" value="1"/>
</dbReference>
<dbReference type="PIRSF" id="PIRSF037505">
    <property type="entry name" value="Betaine_HMT"/>
    <property type="match status" value="1"/>
</dbReference>
<dbReference type="SUPFAM" id="SSF82282">
    <property type="entry name" value="Homocysteine S-methyltransferase"/>
    <property type="match status" value="1"/>
</dbReference>
<dbReference type="PROSITE" id="PS50970">
    <property type="entry name" value="HCY"/>
    <property type="match status" value="1"/>
</dbReference>
<protein>
    <recommendedName>
        <fullName>Betaine--homocysteine S-methyltransferase 1</fullName>
        <ecNumber>2.1.1.5</ecNumber>
    </recommendedName>
</protein>
<name>BHMT1_DANRE</name>
<keyword id="KW-0963">Cytoplasm</keyword>
<keyword id="KW-0479">Metal-binding</keyword>
<keyword id="KW-0489">Methyltransferase</keyword>
<keyword id="KW-1185">Reference proteome</keyword>
<keyword id="KW-0808">Transferase</keyword>
<keyword id="KW-0862">Zinc</keyword>